<gene>
    <name evidence="1" type="primary">aroC</name>
    <name type="ordered locus">GFO_1627</name>
</gene>
<protein>
    <recommendedName>
        <fullName evidence="1">Chorismate synthase</fullName>
        <shortName evidence="1">CS</shortName>
        <ecNumber evidence="1">4.2.3.5</ecNumber>
    </recommendedName>
    <alternativeName>
        <fullName evidence="1">5-enolpyruvylshikimate-3-phosphate phospholyase</fullName>
    </alternativeName>
</protein>
<keyword id="KW-0028">Amino-acid biosynthesis</keyword>
<keyword id="KW-0057">Aromatic amino acid biosynthesis</keyword>
<keyword id="KW-0274">FAD</keyword>
<keyword id="KW-0285">Flavoprotein</keyword>
<keyword id="KW-0288">FMN</keyword>
<keyword id="KW-0456">Lyase</keyword>
<keyword id="KW-0521">NADP</keyword>
<feature type="chain" id="PRO_0000322403" description="Chorismate synthase">
    <location>
        <begin position="1"/>
        <end position="354"/>
    </location>
</feature>
<feature type="binding site" evidence="1">
    <location>
        <position position="48"/>
    </location>
    <ligand>
        <name>NADP(+)</name>
        <dbReference type="ChEBI" id="CHEBI:58349"/>
    </ligand>
</feature>
<feature type="binding site" evidence="1">
    <location>
        <begin position="125"/>
        <end position="127"/>
    </location>
    <ligand>
        <name>FMN</name>
        <dbReference type="ChEBI" id="CHEBI:58210"/>
    </ligand>
</feature>
<feature type="binding site" evidence="1">
    <location>
        <begin position="239"/>
        <end position="240"/>
    </location>
    <ligand>
        <name>FMN</name>
        <dbReference type="ChEBI" id="CHEBI:58210"/>
    </ligand>
</feature>
<feature type="binding site" evidence="1">
    <location>
        <position position="280"/>
    </location>
    <ligand>
        <name>FMN</name>
        <dbReference type="ChEBI" id="CHEBI:58210"/>
    </ligand>
</feature>
<feature type="binding site" evidence="1">
    <location>
        <begin position="295"/>
        <end position="299"/>
    </location>
    <ligand>
        <name>FMN</name>
        <dbReference type="ChEBI" id="CHEBI:58210"/>
    </ligand>
</feature>
<feature type="binding site" evidence="1">
    <location>
        <position position="321"/>
    </location>
    <ligand>
        <name>FMN</name>
        <dbReference type="ChEBI" id="CHEBI:58210"/>
    </ligand>
</feature>
<accession>A0M1V5</accession>
<sequence>MPGNSFGKMFKLTTFGESHGVAIGGVIDGCPAGLEIDTESVQNDLNRRRPGQSAIVTQRKEPDTVEFLSGIFEGKTTGTPIGFIIKNANQKSKDYSHIKDTYRPSHADYTYDEKYGIRDYRGGGRSSARETACRVVAGSIAKQMLKSVSFNAFVSSVGKIELNKDYSELDFSEIEKNPVRCPDPEMAREMEAYIKEIRGDGDTVGGTVQCVIKNVPIGLGEPVFDKLHAELGKAMLSINAVKGFEYGSGFEGTKMRGSEHNDHFNTDGSTQTNLSGGIQGGISNGMDIYFKVAFKPVATLMQKQQTINSKGDEVEMQGKGRHDPCVVPRAVPIVESMAALVLADYYLQNKSSKI</sequence>
<comment type="function">
    <text evidence="1">Catalyzes the anti-1,4-elimination of the C-3 phosphate and the C-6 proR hydrogen from 5-enolpyruvylshikimate-3-phosphate (EPSP) to yield chorismate, which is the branch point compound that serves as the starting substrate for the three terminal pathways of aromatic amino acid biosynthesis. This reaction introduces a second double bond into the aromatic ring system.</text>
</comment>
<comment type="catalytic activity">
    <reaction evidence="1">
        <text>5-O-(1-carboxyvinyl)-3-phosphoshikimate = chorismate + phosphate</text>
        <dbReference type="Rhea" id="RHEA:21020"/>
        <dbReference type="ChEBI" id="CHEBI:29748"/>
        <dbReference type="ChEBI" id="CHEBI:43474"/>
        <dbReference type="ChEBI" id="CHEBI:57701"/>
        <dbReference type="EC" id="4.2.3.5"/>
    </reaction>
</comment>
<comment type="cofactor">
    <cofactor evidence="1">
        <name>FMNH2</name>
        <dbReference type="ChEBI" id="CHEBI:57618"/>
    </cofactor>
    <text evidence="1">Reduced FMN (FMNH(2)).</text>
</comment>
<comment type="pathway">
    <text evidence="1">Metabolic intermediate biosynthesis; chorismate biosynthesis; chorismate from D-erythrose 4-phosphate and phosphoenolpyruvate: step 7/7.</text>
</comment>
<comment type="subunit">
    <text evidence="1">Homotetramer.</text>
</comment>
<comment type="similarity">
    <text evidence="1">Belongs to the chorismate synthase family.</text>
</comment>
<comment type="sequence caution" evidence="2">
    <conflict type="erroneous initiation">
        <sequence resource="EMBL-CDS" id="CAL66600"/>
    </conflict>
    <text>Extended N-terminus.</text>
</comment>
<dbReference type="EC" id="4.2.3.5" evidence="1"/>
<dbReference type="EMBL" id="CU207366">
    <property type="protein sequence ID" value="CAL66600.1"/>
    <property type="status" value="ALT_INIT"/>
    <property type="molecule type" value="Genomic_DNA"/>
</dbReference>
<dbReference type="RefSeq" id="WP_011709508.1">
    <property type="nucleotide sequence ID" value="NC_008571.1"/>
</dbReference>
<dbReference type="SMR" id="A0M1V5"/>
<dbReference type="STRING" id="411154.GFO_1627"/>
<dbReference type="KEGG" id="gfo:GFO_1627"/>
<dbReference type="eggNOG" id="COG0082">
    <property type="taxonomic scope" value="Bacteria"/>
</dbReference>
<dbReference type="HOGENOM" id="CLU_034547_0_2_10"/>
<dbReference type="OrthoDB" id="9771806at2"/>
<dbReference type="UniPathway" id="UPA00053">
    <property type="reaction ID" value="UER00090"/>
</dbReference>
<dbReference type="Proteomes" id="UP000000755">
    <property type="component" value="Chromosome"/>
</dbReference>
<dbReference type="GO" id="GO:0005829">
    <property type="term" value="C:cytosol"/>
    <property type="evidence" value="ECO:0007669"/>
    <property type="project" value="TreeGrafter"/>
</dbReference>
<dbReference type="GO" id="GO:0004107">
    <property type="term" value="F:chorismate synthase activity"/>
    <property type="evidence" value="ECO:0007669"/>
    <property type="project" value="UniProtKB-UniRule"/>
</dbReference>
<dbReference type="GO" id="GO:0010181">
    <property type="term" value="F:FMN binding"/>
    <property type="evidence" value="ECO:0007669"/>
    <property type="project" value="TreeGrafter"/>
</dbReference>
<dbReference type="GO" id="GO:0008652">
    <property type="term" value="P:amino acid biosynthetic process"/>
    <property type="evidence" value="ECO:0007669"/>
    <property type="project" value="UniProtKB-KW"/>
</dbReference>
<dbReference type="GO" id="GO:0009073">
    <property type="term" value="P:aromatic amino acid family biosynthetic process"/>
    <property type="evidence" value="ECO:0007669"/>
    <property type="project" value="UniProtKB-KW"/>
</dbReference>
<dbReference type="GO" id="GO:0009423">
    <property type="term" value="P:chorismate biosynthetic process"/>
    <property type="evidence" value="ECO:0007669"/>
    <property type="project" value="UniProtKB-UniRule"/>
</dbReference>
<dbReference type="CDD" id="cd07304">
    <property type="entry name" value="Chorismate_synthase"/>
    <property type="match status" value="1"/>
</dbReference>
<dbReference type="FunFam" id="3.60.150.10:FF:000003">
    <property type="entry name" value="Chorismate synthase"/>
    <property type="match status" value="1"/>
</dbReference>
<dbReference type="Gene3D" id="3.60.150.10">
    <property type="entry name" value="Chorismate synthase AroC"/>
    <property type="match status" value="1"/>
</dbReference>
<dbReference type="HAMAP" id="MF_00300">
    <property type="entry name" value="Chorismate_synth"/>
    <property type="match status" value="1"/>
</dbReference>
<dbReference type="InterPro" id="IPR000453">
    <property type="entry name" value="Chorismate_synth"/>
</dbReference>
<dbReference type="InterPro" id="IPR035904">
    <property type="entry name" value="Chorismate_synth_AroC_sf"/>
</dbReference>
<dbReference type="InterPro" id="IPR020541">
    <property type="entry name" value="Chorismate_synthase_CS"/>
</dbReference>
<dbReference type="NCBIfam" id="TIGR00033">
    <property type="entry name" value="aroC"/>
    <property type="match status" value="1"/>
</dbReference>
<dbReference type="NCBIfam" id="NF003793">
    <property type="entry name" value="PRK05382.1"/>
    <property type="match status" value="1"/>
</dbReference>
<dbReference type="PANTHER" id="PTHR21085">
    <property type="entry name" value="CHORISMATE SYNTHASE"/>
    <property type="match status" value="1"/>
</dbReference>
<dbReference type="PANTHER" id="PTHR21085:SF0">
    <property type="entry name" value="CHORISMATE SYNTHASE"/>
    <property type="match status" value="1"/>
</dbReference>
<dbReference type="Pfam" id="PF01264">
    <property type="entry name" value="Chorismate_synt"/>
    <property type="match status" value="1"/>
</dbReference>
<dbReference type="PIRSF" id="PIRSF001456">
    <property type="entry name" value="Chorismate_synth"/>
    <property type="match status" value="1"/>
</dbReference>
<dbReference type="SUPFAM" id="SSF103263">
    <property type="entry name" value="Chorismate synthase, AroC"/>
    <property type="match status" value="1"/>
</dbReference>
<dbReference type="PROSITE" id="PS00787">
    <property type="entry name" value="CHORISMATE_SYNTHASE_1"/>
    <property type="match status" value="1"/>
</dbReference>
<dbReference type="PROSITE" id="PS00788">
    <property type="entry name" value="CHORISMATE_SYNTHASE_2"/>
    <property type="match status" value="1"/>
</dbReference>
<dbReference type="PROSITE" id="PS00789">
    <property type="entry name" value="CHORISMATE_SYNTHASE_3"/>
    <property type="match status" value="1"/>
</dbReference>
<evidence type="ECO:0000255" key="1">
    <source>
        <dbReference type="HAMAP-Rule" id="MF_00300"/>
    </source>
</evidence>
<evidence type="ECO:0000305" key="2"/>
<proteinExistence type="inferred from homology"/>
<organism>
    <name type="scientific">Christiangramia forsetii (strain DSM 17595 / CGMCC 1.15422 / KT0803)</name>
    <name type="common">Gramella forsetii</name>
    <dbReference type="NCBI Taxonomy" id="411154"/>
    <lineage>
        <taxon>Bacteria</taxon>
        <taxon>Pseudomonadati</taxon>
        <taxon>Bacteroidota</taxon>
        <taxon>Flavobacteriia</taxon>
        <taxon>Flavobacteriales</taxon>
        <taxon>Flavobacteriaceae</taxon>
        <taxon>Christiangramia</taxon>
    </lineage>
</organism>
<reference key="1">
    <citation type="journal article" date="2006" name="Environ. Microbiol.">
        <title>Whole genome analysis of the marine Bacteroidetes'Gramella forsetii' reveals adaptations to degradation of polymeric organic matter.</title>
        <authorList>
            <person name="Bauer M."/>
            <person name="Kube M."/>
            <person name="Teeling H."/>
            <person name="Richter M."/>
            <person name="Lombardot T."/>
            <person name="Allers E."/>
            <person name="Wuerdemann C.A."/>
            <person name="Quast C."/>
            <person name="Kuhl H."/>
            <person name="Knaust F."/>
            <person name="Woebken D."/>
            <person name="Bischof K."/>
            <person name="Mussmann M."/>
            <person name="Choudhuri J.V."/>
            <person name="Meyer F."/>
            <person name="Reinhardt R."/>
            <person name="Amann R.I."/>
            <person name="Gloeckner F.O."/>
        </authorList>
    </citation>
    <scope>NUCLEOTIDE SEQUENCE [LARGE SCALE GENOMIC DNA]</scope>
    <source>
        <strain>DSM 17595 / CGMCC 1.15422 / KT0803</strain>
    </source>
</reference>
<name>AROC_CHRFK</name>